<evidence type="ECO:0000255" key="1">
    <source>
        <dbReference type="HAMAP-Rule" id="MF_00719"/>
    </source>
</evidence>
<accession>B0KCS0</accession>
<name>COBS_THEP3</name>
<sequence>MEEIKRLVLAMQFMTRLPIPIEIDVEKREFYRIASYFPIVGIVIGGILSLLYIALKDFFSREIVMTFIVAFSYVLTGAMHIDGLADTFDGLFSNKDKSKMLEIMRDSRLGTNGVLAAIFIVVLKILFLTNIHENITLTALLITPIIGRLSIVFSMMISKSARGGEGLGGLMLGKVGIREFAIAFVISIATSYFILPLAVFVKILTISLFVTYIVSKYISLRIGGMTGDTLGAVNELAELTALICFVSVSL</sequence>
<dbReference type="EC" id="2.7.8.26" evidence="1"/>
<dbReference type="EMBL" id="CP000924">
    <property type="protein sequence ID" value="ABY95527.1"/>
    <property type="molecule type" value="Genomic_DNA"/>
</dbReference>
<dbReference type="RefSeq" id="WP_012269645.1">
    <property type="nucleotide sequence ID" value="NC_010321.1"/>
</dbReference>
<dbReference type="STRING" id="340099.Teth39_1894"/>
<dbReference type="KEGG" id="tpd:Teth39_1894"/>
<dbReference type="eggNOG" id="COG0368">
    <property type="taxonomic scope" value="Bacteria"/>
</dbReference>
<dbReference type="HOGENOM" id="CLU_057426_1_2_9"/>
<dbReference type="UniPathway" id="UPA00148">
    <property type="reaction ID" value="UER00238"/>
</dbReference>
<dbReference type="Proteomes" id="UP000002156">
    <property type="component" value="Chromosome"/>
</dbReference>
<dbReference type="GO" id="GO:0005886">
    <property type="term" value="C:plasma membrane"/>
    <property type="evidence" value="ECO:0007669"/>
    <property type="project" value="UniProtKB-SubCell"/>
</dbReference>
<dbReference type="GO" id="GO:0051073">
    <property type="term" value="F:adenosylcobinamide-GDP ribazoletransferase activity"/>
    <property type="evidence" value="ECO:0007669"/>
    <property type="project" value="UniProtKB-UniRule"/>
</dbReference>
<dbReference type="GO" id="GO:0008818">
    <property type="term" value="F:cobalamin 5'-phosphate synthase activity"/>
    <property type="evidence" value="ECO:0007669"/>
    <property type="project" value="UniProtKB-UniRule"/>
</dbReference>
<dbReference type="GO" id="GO:0009236">
    <property type="term" value="P:cobalamin biosynthetic process"/>
    <property type="evidence" value="ECO:0007669"/>
    <property type="project" value="UniProtKB-UniRule"/>
</dbReference>
<dbReference type="HAMAP" id="MF_00719">
    <property type="entry name" value="CobS"/>
    <property type="match status" value="1"/>
</dbReference>
<dbReference type="InterPro" id="IPR003805">
    <property type="entry name" value="CobS"/>
</dbReference>
<dbReference type="NCBIfam" id="TIGR00317">
    <property type="entry name" value="cobS"/>
    <property type="match status" value="1"/>
</dbReference>
<dbReference type="PANTHER" id="PTHR34148">
    <property type="entry name" value="ADENOSYLCOBINAMIDE-GDP RIBAZOLETRANSFERASE"/>
    <property type="match status" value="1"/>
</dbReference>
<dbReference type="PANTHER" id="PTHR34148:SF1">
    <property type="entry name" value="ADENOSYLCOBINAMIDE-GDP RIBAZOLETRANSFERASE"/>
    <property type="match status" value="1"/>
</dbReference>
<dbReference type="Pfam" id="PF02654">
    <property type="entry name" value="CobS"/>
    <property type="match status" value="1"/>
</dbReference>
<protein>
    <recommendedName>
        <fullName evidence="1">Adenosylcobinamide-GDP ribazoletransferase</fullName>
        <ecNumber evidence="1">2.7.8.26</ecNumber>
    </recommendedName>
    <alternativeName>
        <fullName evidence="1">Cobalamin synthase</fullName>
    </alternativeName>
    <alternativeName>
        <fullName evidence="1">Cobalamin-5'-phosphate synthase</fullName>
    </alternativeName>
</protein>
<organism>
    <name type="scientific">Thermoanaerobacter pseudethanolicus (strain ATCC 33223 / 39E)</name>
    <name type="common">Clostridium thermohydrosulfuricum</name>
    <dbReference type="NCBI Taxonomy" id="340099"/>
    <lineage>
        <taxon>Bacteria</taxon>
        <taxon>Bacillati</taxon>
        <taxon>Bacillota</taxon>
        <taxon>Clostridia</taxon>
        <taxon>Thermoanaerobacterales</taxon>
        <taxon>Thermoanaerobacteraceae</taxon>
        <taxon>Thermoanaerobacter</taxon>
    </lineage>
</organism>
<gene>
    <name evidence="1" type="primary">cobS</name>
    <name type="ordered locus">Teth39_1894</name>
</gene>
<feature type="chain" id="PRO_1000132610" description="Adenosylcobinamide-GDP ribazoletransferase">
    <location>
        <begin position="1"/>
        <end position="250"/>
    </location>
</feature>
<feature type="transmembrane region" description="Helical" evidence="1">
    <location>
        <begin position="33"/>
        <end position="53"/>
    </location>
</feature>
<feature type="transmembrane region" description="Helical" evidence="1">
    <location>
        <begin position="63"/>
        <end position="83"/>
    </location>
</feature>
<feature type="transmembrane region" description="Helical" evidence="1">
    <location>
        <begin position="109"/>
        <end position="129"/>
    </location>
</feature>
<feature type="transmembrane region" description="Helical" evidence="1">
    <location>
        <begin position="137"/>
        <end position="157"/>
    </location>
</feature>
<feature type="transmembrane region" description="Helical" evidence="1">
    <location>
        <begin position="180"/>
        <end position="200"/>
    </location>
</feature>
<feature type="transmembrane region" description="Helical" evidence="1">
    <location>
        <begin position="203"/>
        <end position="223"/>
    </location>
</feature>
<keyword id="KW-1003">Cell membrane</keyword>
<keyword id="KW-0169">Cobalamin biosynthesis</keyword>
<keyword id="KW-0460">Magnesium</keyword>
<keyword id="KW-0472">Membrane</keyword>
<keyword id="KW-1185">Reference proteome</keyword>
<keyword id="KW-0808">Transferase</keyword>
<keyword id="KW-0812">Transmembrane</keyword>
<keyword id="KW-1133">Transmembrane helix</keyword>
<reference key="1">
    <citation type="submission" date="2008-01" db="EMBL/GenBank/DDBJ databases">
        <title>Complete sequence of Thermoanaerobacter pseudethanolicus 39E.</title>
        <authorList>
            <person name="Copeland A."/>
            <person name="Lucas S."/>
            <person name="Lapidus A."/>
            <person name="Barry K."/>
            <person name="Glavina del Rio T."/>
            <person name="Dalin E."/>
            <person name="Tice H."/>
            <person name="Pitluck S."/>
            <person name="Bruce D."/>
            <person name="Goodwin L."/>
            <person name="Saunders E."/>
            <person name="Brettin T."/>
            <person name="Detter J.C."/>
            <person name="Han C."/>
            <person name="Schmutz J."/>
            <person name="Larimer F."/>
            <person name="Land M."/>
            <person name="Hauser L."/>
            <person name="Kyrpides N."/>
            <person name="Lykidis A."/>
            <person name="Hemme C."/>
            <person name="Fields M.W."/>
            <person name="He Z."/>
            <person name="Zhou J."/>
            <person name="Richardson P."/>
        </authorList>
    </citation>
    <scope>NUCLEOTIDE SEQUENCE [LARGE SCALE GENOMIC DNA]</scope>
    <source>
        <strain>ATCC 33223 / DSM 2355 / 39E</strain>
    </source>
</reference>
<proteinExistence type="inferred from homology"/>
<comment type="function">
    <text evidence="1">Joins adenosylcobinamide-GDP and alpha-ribazole to generate adenosylcobalamin (Ado-cobalamin). Also synthesizes adenosylcobalamin 5'-phosphate from adenosylcobinamide-GDP and alpha-ribazole 5'-phosphate.</text>
</comment>
<comment type="catalytic activity">
    <reaction evidence="1">
        <text>alpha-ribazole + adenosylcob(III)inamide-GDP = adenosylcob(III)alamin + GMP + H(+)</text>
        <dbReference type="Rhea" id="RHEA:16049"/>
        <dbReference type="ChEBI" id="CHEBI:10329"/>
        <dbReference type="ChEBI" id="CHEBI:15378"/>
        <dbReference type="ChEBI" id="CHEBI:18408"/>
        <dbReference type="ChEBI" id="CHEBI:58115"/>
        <dbReference type="ChEBI" id="CHEBI:60487"/>
        <dbReference type="EC" id="2.7.8.26"/>
    </reaction>
</comment>
<comment type="catalytic activity">
    <reaction evidence="1">
        <text>alpha-ribazole 5'-phosphate + adenosylcob(III)inamide-GDP = adenosylcob(III)alamin 5'-phosphate + GMP + H(+)</text>
        <dbReference type="Rhea" id="RHEA:23560"/>
        <dbReference type="ChEBI" id="CHEBI:15378"/>
        <dbReference type="ChEBI" id="CHEBI:57918"/>
        <dbReference type="ChEBI" id="CHEBI:58115"/>
        <dbReference type="ChEBI" id="CHEBI:60487"/>
        <dbReference type="ChEBI" id="CHEBI:60493"/>
        <dbReference type="EC" id="2.7.8.26"/>
    </reaction>
</comment>
<comment type="cofactor">
    <cofactor evidence="1">
        <name>Mg(2+)</name>
        <dbReference type="ChEBI" id="CHEBI:18420"/>
    </cofactor>
</comment>
<comment type="pathway">
    <text evidence="1">Cofactor biosynthesis; adenosylcobalamin biosynthesis; adenosylcobalamin from cob(II)yrinate a,c-diamide: step 7/7.</text>
</comment>
<comment type="subcellular location">
    <subcellularLocation>
        <location evidence="1">Cell membrane</location>
        <topology evidence="1">Multi-pass membrane protein</topology>
    </subcellularLocation>
</comment>
<comment type="similarity">
    <text evidence="1">Belongs to the CobS family.</text>
</comment>